<accession>Q1CCJ8</accession>
<accession>D1Q2X4</accession>
<keyword id="KW-0067">ATP-binding</keyword>
<keyword id="KW-0963">Cytoplasm</keyword>
<keyword id="KW-0235">DNA replication</keyword>
<keyword id="KW-0238">DNA-binding</keyword>
<keyword id="KW-0446">Lipid-binding</keyword>
<keyword id="KW-0547">Nucleotide-binding</keyword>
<evidence type="ECO:0000255" key="1">
    <source>
        <dbReference type="HAMAP-Rule" id="MF_00377"/>
    </source>
</evidence>
<evidence type="ECO:0000256" key="2">
    <source>
        <dbReference type="SAM" id="MobiDB-lite"/>
    </source>
</evidence>
<comment type="function">
    <text evidence="1">Plays an essential role in the initiation and regulation of chromosomal replication. ATP-DnaA binds to the origin of replication (oriC) to initiate formation of the DNA replication initiation complex once per cell cycle. Binds the DnaA box (a 9 base pair repeat at the origin) and separates the double-stranded (ds)DNA. Forms a right-handed helical filament on oriC DNA; dsDNA binds to the exterior of the filament while single-stranded (ss)DNA is stabiized in the filament's interior. The ATP-DnaA-oriC complex binds and stabilizes one strand of the AT-rich DNA unwinding element (DUE), permitting loading of DNA polymerase. After initiation quickly degrades to an ADP-DnaA complex that is not apt for DNA replication. Binds acidic phospholipids.</text>
</comment>
<comment type="subunit">
    <text evidence="1">Oligomerizes as a right-handed, spiral filament on DNA at oriC.</text>
</comment>
<comment type="subcellular location">
    <subcellularLocation>
        <location evidence="1">Cytoplasm</location>
    </subcellularLocation>
</comment>
<comment type="domain">
    <text evidence="1">Domain I is involved in oligomerization and binding regulators, domain II is flexibile and of varying length in different bacteria, domain III forms the AAA+ region, while domain IV binds dsDNA.</text>
</comment>
<comment type="similarity">
    <text evidence="1">Belongs to the DnaA family.</text>
</comment>
<feature type="chain" id="PRO_1000048762" description="Chromosomal replication initiator protein DnaA">
    <location>
        <begin position="1"/>
        <end position="462"/>
    </location>
</feature>
<feature type="region of interest" description="Domain I, interacts with DnaA modulators" evidence="1">
    <location>
        <begin position="1"/>
        <end position="83"/>
    </location>
</feature>
<feature type="region of interest" description="Domain II" evidence="1">
    <location>
        <begin position="83"/>
        <end position="125"/>
    </location>
</feature>
<feature type="region of interest" description="Disordered" evidence="2">
    <location>
        <begin position="104"/>
        <end position="125"/>
    </location>
</feature>
<feature type="region of interest" description="Domain III, AAA+ region" evidence="1">
    <location>
        <begin position="126"/>
        <end position="342"/>
    </location>
</feature>
<feature type="region of interest" description="Domain IV, binds dsDNA" evidence="1">
    <location>
        <begin position="343"/>
        <end position="462"/>
    </location>
</feature>
<feature type="compositionally biased region" description="Polar residues" evidence="2">
    <location>
        <begin position="112"/>
        <end position="125"/>
    </location>
</feature>
<feature type="binding site" evidence="1">
    <location>
        <position position="170"/>
    </location>
    <ligand>
        <name>ATP</name>
        <dbReference type="ChEBI" id="CHEBI:30616"/>
    </ligand>
</feature>
<feature type="binding site" evidence="1">
    <location>
        <position position="172"/>
    </location>
    <ligand>
        <name>ATP</name>
        <dbReference type="ChEBI" id="CHEBI:30616"/>
    </ligand>
</feature>
<feature type="binding site" evidence="1">
    <location>
        <position position="173"/>
    </location>
    <ligand>
        <name>ATP</name>
        <dbReference type="ChEBI" id="CHEBI:30616"/>
    </ligand>
</feature>
<feature type="binding site" evidence="1">
    <location>
        <position position="174"/>
    </location>
    <ligand>
        <name>ATP</name>
        <dbReference type="ChEBI" id="CHEBI:30616"/>
    </ligand>
</feature>
<name>DNAA_YERPN</name>
<dbReference type="EMBL" id="CP000305">
    <property type="protein sequence ID" value="ABG20282.1"/>
    <property type="molecule type" value="Genomic_DNA"/>
</dbReference>
<dbReference type="EMBL" id="ACNQ01000019">
    <property type="protein sequence ID" value="EEO74877.1"/>
    <property type="molecule type" value="Genomic_DNA"/>
</dbReference>
<dbReference type="RefSeq" id="WP_002220732.1">
    <property type="nucleotide sequence ID" value="NZ_ACNQ01000019.1"/>
</dbReference>
<dbReference type="SMR" id="Q1CCJ8"/>
<dbReference type="GeneID" id="57974625"/>
<dbReference type="KEGG" id="ypn:YPN_3955"/>
<dbReference type="HOGENOM" id="CLU_026910_0_1_6"/>
<dbReference type="Proteomes" id="UP000008936">
    <property type="component" value="Chromosome"/>
</dbReference>
<dbReference type="GO" id="GO:0005737">
    <property type="term" value="C:cytoplasm"/>
    <property type="evidence" value="ECO:0007669"/>
    <property type="project" value="UniProtKB-SubCell"/>
</dbReference>
<dbReference type="GO" id="GO:0005886">
    <property type="term" value="C:plasma membrane"/>
    <property type="evidence" value="ECO:0007669"/>
    <property type="project" value="TreeGrafter"/>
</dbReference>
<dbReference type="GO" id="GO:0005524">
    <property type="term" value="F:ATP binding"/>
    <property type="evidence" value="ECO:0007669"/>
    <property type="project" value="UniProtKB-UniRule"/>
</dbReference>
<dbReference type="GO" id="GO:0016887">
    <property type="term" value="F:ATP hydrolysis activity"/>
    <property type="evidence" value="ECO:0007669"/>
    <property type="project" value="InterPro"/>
</dbReference>
<dbReference type="GO" id="GO:0003688">
    <property type="term" value="F:DNA replication origin binding"/>
    <property type="evidence" value="ECO:0007669"/>
    <property type="project" value="UniProtKB-UniRule"/>
</dbReference>
<dbReference type="GO" id="GO:0008289">
    <property type="term" value="F:lipid binding"/>
    <property type="evidence" value="ECO:0007669"/>
    <property type="project" value="UniProtKB-KW"/>
</dbReference>
<dbReference type="GO" id="GO:0006270">
    <property type="term" value="P:DNA replication initiation"/>
    <property type="evidence" value="ECO:0007669"/>
    <property type="project" value="UniProtKB-UniRule"/>
</dbReference>
<dbReference type="GO" id="GO:0006275">
    <property type="term" value="P:regulation of DNA replication"/>
    <property type="evidence" value="ECO:0007669"/>
    <property type="project" value="UniProtKB-UniRule"/>
</dbReference>
<dbReference type="CDD" id="cd00009">
    <property type="entry name" value="AAA"/>
    <property type="match status" value="1"/>
</dbReference>
<dbReference type="CDD" id="cd06571">
    <property type="entry name" value="Bac_DnaA_C"/>
    <property type="match status" value="1"/>
</dbReference>
<dbReference type="FunFam" id="1.10.1750.10:FF:000001">
    <property type="entry name" value="Chromosomal replication initiator protein DnaA"/>
    <property type="match status" value="1"/>
</dbReference>
<dbReference type="FunFam" id="1.10.8.60:FF:000003">
    <property type="entry name" value="Chromosomal replication initiator protein DnaA"/>
    <property type="match status" value="1"/>
</dbReference>
<dbReference type="FunFam" id="3.30.300.180:FF:000001">
    <property type="entry name" value="Chromosomal replication initiator protein DnaA"/>
    <property type="match status" value="1"/>
</dbReference>
<dbReference type="FunFam" id="3.40.50.300:FF:000103">
    <property type="entry name" value="Chromosomal replication initiator protein DnaA"/>
    <property type="match status" value="1"/>
</dbReference>
<dbReference type="Gene3D" id="1.10.1750.10">
    <property type="match status" value="1"/>
</dbReference>
<dbReference type="Gene3D" id="1.10.8.60">
    <property type="match status" value="1"/>
</dbReference>
<dbReference type="Gene3D" id="3.30.300.180">
    <property type="match status" value="1"/>
</dbReference>
<dbReference type="Gene3D" id="3.40.50.300">
    <property type="entry name" value="P-loop containing nucleotide triphosphate hydrolases"/>
    <property type="match status" value="1"/>
</dbReference>
<dbReference type="HAMAP" id="MF_00377">
    <property type="entry name" value="DnaA_bact"/>
    <property type="match status" value="1"/>
</dbReference>
<dbReference type="InterPro" id="IPR003593">
    <property type="entry name" value="AAA+_ATPase"/>
</dbReference>
<dbReference type="InterPro" id="IPR001957">
    <property type="entry name" value="Chromosome_initiator_DnaA"/>
</dbReference>
<dbReference type="InterPro" id="IPR020591">
    <property type="entry name" value="Chromosome_initiator_DnaA-like"/>
</dbReference>
<dbReference type="InterPro" id="IPR018312">
    <property type="entry name" value="Chromosome_initiator_DnaA_CS"/>
</dbReference>
<dbReference type="InterPro" id="IPR013159">
    <property type="entry name" value="DnaA_C"/>
</dbReference>
<dbReference type="InterPro" id="IPR013317">
    <property type="entry name" value="DnaA_dom"/>
</dbReference>
<dbReference type="InterPro" id="IPR024633">
    <property type="entry name" value="DnaA_N_dom"/>
</dbReference>
<dbReference type="InterPro" id="IPR038454">
    <property type="entry name" value="DnaA_N_sf"/>
</dbReference>
<dbReference type="InterPro" id="IPR027417">
    <property type="entry name" value="P-loop_NTPase"/>
</dbReference>
<dbReference type="InterPro" id="IPR010921">
    <property type="entry name" value="Trp_repressor/repl_initiator"/>
</dbReference>
<dbReference type="NCBIfam" id="TIGR00362">
    <property type="entry name" value="DnaA"/>
    <property type="match status" value="1"/>
</dbReference>
<dbReference type="PANTHER" id="PTHR30050">
    <property type="entry name" value="CHROMOSOMAL REPLICATION INITIATOR PROTEIN DNAA"/>
    <property type="match status" value="1"/>
</dbReference>
<dbReference type="PANTHER" id="PTHR30050:SF2">
    <property type="entry name" value="CHROMOSOMAL REPLICATION INITIATOR PROTEIN DNAA"/>
    <property type="match status" value="1"/>
</dbReference>
<dbReference type="Pfam" id="PF00308">
    <property type="entry name" value="Bac_DnaA"/>
    <property type="match status" value="1"/>
</dbReference>
<dbReference type="Pfam" id="PF08299">
    <property type="entry name" value="Bac_DnaA_C"/>
    <property type="match status" value="1"/>
</dbReference>
<dbReference type="Pfam" id="PF11638">
    <property type="entry name" value="DnaA_N"/>
    <property type="match status" value="1"/>
</dbReference>
<dbReference type="PRINTS" id="PR00051">
    <property type="entry name" value="DNAA"/>
</dbReference>
<dbReference type="SMART" id="SM00382">
    <property type="entry name" value="AAA"/>
    <property type="match status" value="1"/>
</dbReference>
<dbReference type="SMART" id="SM00760">
    <property type="entry name" value="Bac_DnaA_C"/>
    <property type="match status" value="1"/>
</dbReference>
<dbReference type="SUPFAM" id="SSF52540">
    <property type="entry name" value="P-loop containing nucleoside triphosphate hydrolases"/>
    <property type="match status" value="1"/>
</dbReference>
<dbReference type="SUPFAM" id="SSF48295">
    <property type="entry name" value="TrpR-like"/>
    <property type="match status" value="1"/>
</dbReference>
<dbReference type="PROSITE" id="PS01008">
    <property type="entry name" value="DNAA"/>
    <property type="match status" value="1"/>
</dbReference>
<proteinExistence type="inferred from homology"/>
<sequence>MSLSLWQQCLARLQDELPATEFSMWIRPLQAELSDNTLALYAPNRFVLDWVRDKYLNNINGLLNDFCGTEVPLLRFEVGSKPAARAHNNPVTASVSAPVAPVTRSAPMRPSWDNSPAQPELSYRSNVNPKHTFDNFVEGKSNQLARAAARQVADNPGGAYNPLFLYGGTGLGKTHLLHAVGNGIMARKANAKVVYMHSERFVQDMVKALQNNAIEEFKRYYRSVDALLIDDIQFFANKERSQEEFFHTFNALLEGNQQIILTSDRYPKEINGVEDRLKSRFGWGLTVAIEPPELETRVAILMKKADENDIRLPGEVAFFIAKRLRSNVRELEGALNRVIANANFTGRAITIDFVREALRDLLALQEKLVTIDNIQKTVAEYYKIKVADLLSKRRSRSVARPRQMAMALAKELTNHSLPEIGDAFGGRDHTTVLHACRKIEQLREESHDIKEDFSNLIRTLSS</sequence>
<protein>
    <recommendedName>
        <fullName evidence="1">Chromosomal replication initiator protein DnaA</fullName>
    </recommendedName>
</protein>
<gene>
    <name evidence="1" type="primary">dnaA</name>
    <name type="ordered locus">YPN_3955</name>
    <name type="ORF">YP516_4487</name>
</gene>
<reference key="1">
    <citation type="journal article" date="2006" name="J. Bacteriol.">
        <title>Complete genome sequence of Yersinia pestis strains Antiqua and Nepal516: evidence of gene reduction in an emerging pathogen.</title>
        <authorList>
            <person name="Chain P.S.G."/>
            <person name="Hu P."/>
            <person name="Malfatti S.A."/>
            <person name="Radnedge L."/>
            <person name="Larimer F."/>
            <person name="Vergez L.M."/>
            <person name="Worsham P."/>
            <person name="Chu M.C."/>
            <person name="Andersen G.L."/>
        </authorList>
    </citation>
    <scope>NUCLEOTIDE SEQUENCE [LARGE SCALE GENOMIC DNA]</scope>
    <source>
        <strain>Nepal516</strain>
    </source>
</reference>
<reference key="2">
    <citation type="submission" date="2009-04" db="EMBL/GenBank/DDBJ databases">
        <title>Yersinia pestis Nepal516A whole genome shotgun sequencing project.</title>
        <authorList>
            <person name="Plunkett G. III"/>
            <person name="Anderson B.D."/>
            <person name="Baumler D.J."/>
            <person name="Burland V."/>
            <person name="Cabot E.L."/>
            <person name="Glasner J.D."/>
            <person name="Mau B."/>
            <person name="Neeno-Eckwall E."/>
            <person name="Perna N.T."/>
            <person name="Munk A.C."/>
            <person name="Tapia R."/>
            <person name="Green L.D."/>
            <person name="Rogers Y.C."/>
            <person name="Detter J.C."/>
            <person name="Bruce D.C."/>
            <person name="Brettin T.S."/>
        </authorList>
    </citation>
    <scope>NUCLEOTIDE SEQUENCE [LARGE SCALE GENOMIC DNA]</scope>
    <source>
        <strain>Nepal516</strain>
    </source>
</reference>
<organism>
    <name type="scientific">Yersinia pestis bv. Antiqua (strain Nepal516)</name>
    <dbReference type="NCBI Taxonomy" id="377628"/>
    <lineage>
        <taxon>Bacteria</taxon>
        <taxon>Pseudomonadati</taxon>
        <taxon>Pseudomonadota</taxon>
        <taxon>Gammaproteobacteria</taxon>
        <taxon>Enterobacterales</taxon>
        <taxon>Yersiniaceae</taxon>
        <taxon>Yersinia</taxon>
    </lineage>
</organism>